<protein>
    <recommendedName>
        <fullName>Protein MchX</fullName>
    </recommendedName>
</protein>
<gene>
    <name type="primary">mchX</name>
</gene>
<sequence length="39" mass="4268">MEFATNRVTVNDSRSALSSTLLLSLIMSATLLEYSLSMT</sequence>
<accession>O86199</accession>
<comment type="function">
    <text>Required for microcin H47 production. Possibly involved in a regulatory loop modulating its own expression and that of MchI and MchB.</text>
</comment>
<comment type="subcellular location">
    <subcellularLocation>
        <location evidence="2">Cell inner membrane</location>
        <topology evidence="2">Single-pass membrane protein</topology>
    </subcellularLocation>
</comment>
<evidence type="ECO:0000255" key="1"/>
<evidence type="ECO:0000305" key="2"/>
<proteinExistence type="predicted"/>
<dbReference type="EMBL" id="X97613">
    <property type="protein sequence ID" value="CAA66216.1"/>
    <property type="molecule type" value="Genomic_DNA"/>
</dbReference>
<dbReference type="EMBL" id="AJ009631">
    <property type="protein sequence ID" value="CAB54532.1"/>
    <property type="molecule type" value="Genomic_DNA"/>
</dbReference>
<dbReference type="SMR" id="O86199"/>
<dbReference type="GO" id="GO:0005886">
    <property type="term" value="C:plasma membrane"/>
    <property type="evidence" value="ECO:0007669"/>
    <property type="project" value="UniProtKB-SubCell"/>
</dbReference>
<organism>
    <name type="scientific">Escherichia coli</name>
    <dbReference type="NCBI Taxonomy" id="562"/>
    <lineage>
        <taxon>Bacteria</taxon>
        <taxon>Pseudomonadati</taxon>
        <taxon>Pseudomonadota</taxon>
        <taxon>Gammaproteobacteria</taxon>
        <taxon>Enterobacterales</taxon>
        <taxon>Enterobacteriaceae</taxon>
        <taxon>Escherichia</taxon>
    </lineage>
</organism>
<reference key="1">
    <citation type="journal article" date="1998" name="Can. J. Microbiol.">
        <title>Genetic analysis of microcin H47 immunity.</title>
        <authorList>
            <person name="Rodriguez E."/>
            <person name="Lavina M."/>
        </authorList>
    </citation>
    <scope>NUCLEOTIDE SEQUENCE [GENOMIC DNA]</scope>
    <source>
        <strain>H47</strain>
    </source>
</reference>
<keyword id="KW-0997">Cell inner membrane</keyword>
<keyword id="KW-1003">Cell membrane</keyword>
<keyword id="KW-0472">Membrane</keyword>
<keyword id="KW-0812">Transmembrane</keyword>
<keyword id="KW-1133">Transmembrane helix</keyword>
<name>MCHX_ECOLX</name>
<feature type="chain" id="PRO_0000096279" description="Protein MchX">
    <location>
        <begin position="1"/>
        <end position="39"/>
    </location>
</feature>
<feature type="transmembrane region" description="Helical" evidence="1">
    <location>
        <begin position="15"/>
        <end position="37"/>
    </location>
</feature>